<accession>B1IPX9</accession>
<proteinExistence type="inferred from homology"/>
<protein>
    <recommendedName>
        <fullName evidence="1">Large ribosomal subunit protein uL3</fullName>
    </recommendedName>
    <alternativeName>
        <fullName evidence="2">50S ribosomal protein L3</fullName>
    </alternativeName>
</protein>
<gene>
    <name evidence="1" type="primary">rplC</name>
    <name type="ordered locus">EcolC_0393</name>
</gene>
<evidence type="ECO:0000255" key="1">
    <source>
        <dbReference type="HAMAP-Rule" id="MF_01325"/>
    </source>
</evidence>
<evidence type="ECO:0000305" key="2"/>
<dbReference type="EMBL" id="CP000946">
    <property type="protein sequence ID" value="ACA76071.1"/>
    <property type="molecule type" value="Genomic_DNA"/>
</dbReference>
<dbReference type="RefSeq" id="WP_000579833.1">
    <property type="nucleotide sequence ID" value="NZ_MTFT01000014.1"/>
</dbReference>
<dbReference type="SMR" id="B1IPX9"/>
<dbReference type="GeneID" id="86948184"/>
<dbReference type="KEGG" id="ecl:EcolC_0393"/>
<dbReference type="HOGENOM" id="CLU_044142_4_1_6"/>
<dbReference type="GO" id="GO:0022625">
    <property type="term" value="C:cytosolic large ribosomal subunit"/>
    <property type="evidence" value="ECO:0007669"/>
    <property type="project" value="TreeGrafter"/>
</dbReference>
<dbReference type="GO" id="GO:0019843">
    <property type="term" value="F:rRNA binding"/>
    <property type="evidence" value="ECO:0007669"/>
    <property type="project" value="UniProtKB-UniRule"/>
</dbReference>
<dbReference type="GO" id="GO:0003735">
    <property type="term" value="F:structural constituent of ribosome"/>
    <property type="evidence" value="ECO:0007669"/>
    <property type="project" value="InterPro"/>
</dbReference>
<dbReference type="GO" id="GO:0006412">
    <property type="term" value="P:translation"/>
    <property type="evidence" value="ECO:0007669"/>
    <property type="project" value="UniProtKB-UniRule"/>
</dbReference>
<dbReference type="FunFam" id="2.40.30.10:FF:000004">
    <property type="entry name" value="50S ribosomal protein L3"/>
    <property type="match status" value="1"/>
</dbReference>
<dbReference type="FunFam" id="3.30.160.810:FF:000001">
    <property type="entry name" value="50S ribosomal protein L3"/>
    <property type="match status" value="1"/>
</dbReference>
<dbReference type="Gene3D" id="3.30.160.810">
    <property type="match status" value="1"/>
</dbReference>
<dbReference type="Gene3D" id="2.40.30.10">
    <property type="entry name" value="Translation factors"/>
    <property type="match status" value="1"/>
</dbReference>
<dbReference type="HAMAP" id="MF_01325_B">
    <property type="entry name" value="Ribosomal_uL3_B"/>
    <property type="match status" value="1"/>
</dbReference>
<dbReference type="InterPro" id="IPR000597">
    <property type="entry name" value="Ribosomal_uL3"/>
</dbReference>
<dbReference type="InterPro" id="IPR019927">
    <property type="entry name" value="Ribosomal_uL3_bac/org-type"/>
</dbReference>
<dbReference type="InterPro" id="IPR019926">
    <property type="entry name" value="Ribosomal_uL3_CS"/>
</dbReference>
<dbReference type="InterPro" id="IPR009000">
    <property type="entry name" value="Transl_B-barrel_sf"/>
</dbReference>
<dbReference type="NCBIfam" id="TIGR03625">
    <property type="entry name" value="L3_bact"/>
    <property type="match status" value="1"/>
</dbReference>
<dbReference type="PANTHER" id="PTHR11229">
    <property type="entry name" value="50S RIBOSOMAL PROTEIN L3"/>
    <property type="match status" value="1"/>
</dbReference>
<dbReference type="PANTHER" id="PTHR11229:SF16">
    <property type="entry name" value="LARGE RIBOSOMAL SUBUNIT PROTEIN UL3C"/>
    <property type="match status" value="1"/>
</dbReference>
<dbReference type="Pfam" id="PF00297">
    <property type="entry name" value="Ribosomal_L3"/>
    <property type="match status" value="1"/>
</dbReference>
<dbReference type="SUPFAM" id="SSF50447">
    <property type="entry name" value="Translation proteins"/>
    <property type="match status" value="1"/>
</dbReference>
<dbReference type="PROSITE" id="PS00474">
    <property type="entry name" value="RIBOSOMAL_L3"/>
    <property type="match status" value="1"/>
</dbReference>
<comment type="function">
    <text evidence="1">One of the primary rRNA binding proteins, it binds directly near the 3'-end of the 23S rRNA, where it nucleates assembly of the 50S subunit.</text>
</comment>
<comment type="subunit">
    <text evidence="1">Part of the 50S ribosomal subunit. Forms a cluster with proteins L14 and L19.</text>
</comment>
<comment type="PTM">
    <text evidence="1">Methylated by PrmB.</text>
</comment>
<comment type="similarity">
    <text evidence="1">Belongs to the universal ribosomal protein uL3 family.</text>
</comment>
<feature type="chain" id="PRO_1000086439" description="Large ribosomal subunit protein uL3">
    <location>
        <begin position="1"/>
        <end position="209"/>
    </location>
</feature>
<feature type="modified residue" description="N5-methylglutamine" evidence="1">
    <location>
        <position position="150"/>
    </location>
</feature>
<name>RL3_ECOLC</name>
<sequence length="209" mass="22244">MIGLVGKKVGMTRIFTEDGVSIPVTVIEVEANRVTQVKDLANDGYRAIQVTTGAKKANRVTKPEAGHFAKAGVEAGRGLWEFRLAEGEEFTVGQSISVELFADVKKVDVTGTSKGKGFAGTVKRWNFRTQDATHGNSLSHRVPGSIGQNQTPGKVFKGKKMAGQMGNERVTVQSLDVVRVDAERNLLLVKGAVPGATGSDLIVKPAVKA</sequence>
<keyword id="KW-0488">Methylation</keyword>
<keyword id="KW-0687">Ribonucleoprotein</keyword>
<keyword id="KW-0689">Ribosomal protein</keyword>
<keyword id="KW-0694">RNA-binding</keyword>
<keyword id="KW-0699">rRNA-binding</keyword>
<reference key="1">
    <citation type="submission" date="2008-02" db="EMBL/GenBank/DDBJ databases">
        <title>Complete sequence of Escherichia coli C str. ATCC 8739.</title>
        <authorList>
            <person name="Copeland A."/>
            <person name="Lucas S."/>
            <person name="Lapidus A."/>
            <person name="Glavina del Rio T."/>
            <person name="Dalin E."/>
            <person name="Tice H."/>
            <person name="Bruce D."/>
            <person name="Goodwin L."/>
            <person name="Pitluck S."/>
            <person name="Kiss H."/>
            <person name="Brettin T."/>
            <person name="Detter J.C."/>
            <person name="Han C."/>
            <person name="Kuske C.R."/>
            <person name="Schmutz J."/>
            <person name="Larimer F."/>
            <person name="Land M."/>
            <person name="Hauser L."/>
            <person name="Kyrpides N."/>
            <person name="Mikhailova N."/>
            <person name="Ingram L."/>
            <person name="Richardson P."/>
        </authorList>
    </citation>
    <scope>NUCLEOTIDE SEQUENCE [LARGE SCALE GENOMIC DNA]</scope>
    <source>
        <strain>ATCC 8739 / DSM 1576 / NBRC 3972 / NCIMB 8545 / WDCM 00012 / Crooks</strain>
    </source>
</reference>
<organism>
    <name type="scientific">Escherichia coli (strain ATCC 8739 / DSM 1576 / NBRC 3972 / NCIMB 8545 / WDCM 00012 / Crooks)</name>
    <dbReference type="NCBI Taxonomy" id="481805"/>
    <lineage>
        <taxon>Bacteria</taxon>
        <taxon>Pseudomonadati</taxon>
        <taxon>Pseudomonadota</taxon>
        <taxon>Gammaproteobacteria</taxon>
        <taxon>Enterobacterales</taxon>
        <taxon>Enterobacteriaceae</taxon>
        <taxon>Escherichia</taxon>
    </lineage>
</organism>